<comment type="function">
    <text evidence="1">Isomerase that catalyzes the conversion of deoxy-ribose 1-phosphate (dRib-1-P) and ribose 1-phosphate (Rib-1-P) to deoxy-ribose 5-phosphate (dRib-5-P) and ribose 5-phosphate (Rib-5-P), respectively.</text>
</comment>
<comment type="catalytic activity">
    <reaction evidence="1">
        <text>2-deoxy-alpha-D-ribose 1-phosphate = 2-deoxy-D-ribose 5-phosphate</text>
        <dbReference type="Rhea" id="RHEA:27658"/>
        <dbReference type="ChEBI" id="CHEBI:57259"/>
        <dbReference type="ChEBI" id="CHEBI:62877"/>
        <dbReference type="EC" id="5.4.2.7"/>
    </reaction>
</comment>
<comment type="catalytic activity">
    <reaction evidence="1">
        <text>alpha-D-ribose 1-phosphate = D-ribose 5-phosphate</text>
        <dbReference type="Rhea" id="RHEA:18793"/>
        <dbReference type="ChEBI" id="CHEBI:57720"/>
        <dbReference type="ChEBI" id="CHEBI:78346"/>
        <dbReference type="EC" id="5.4.2.7"/>
    </reaction>
</comment>
<comment type="cofactor">
    <cofactor evidence="1">
        <name>Mn(2+)</name>
        <dbReference type="ChEBI" id="CHEBI:29035"/>
    </cofactor>
    <text evidence="1">Binds 2 manganese ions.</text>
</comment>
<comment type="pathway">
    <text evidence="1">Carbohydrate degradation; 2-deoxy-D-ribose 1-phosphate degradation; D-glyceraldehyde 3-phosphate and acetaldehyde from 2-deoxy-alpha-D-ribose 1-phosphate: step 1/2.</text>
</comment>
<comment type="subcellular location">
    <subcellularLocation>
        <location evidence="1">Cytoplasm</location>
    </subcellularLocation>
</comment>
<comment type="similarity">
    <text evidence="1">Belongs to the phosphopentomutase family.</text>
</comment>
<organism>
    <name type="scientific">Streptococcus agalactiae serotype Ia (strain ATCC 27591 / A909 / CDC SS700)</name>
    <dbReference type="NCBI Taxonomy" id="205921"/>
    <lineage>
        <taxon>Bacteria</taxon>
        <taxon>Bacillati</taxon>
        <taxon>Bacillota</taxon>
        <taxon>Bacilli</taxon>
        <taxon>Lactobacillales</taxon>
        <taxon>Streptococcaceae</taxon>
        <taxon>Streptococcus</taxon>
    </lineage>
</organism>
<protein>
    <recommendedName>
        <fullName evidence="1">Phosphopentomutase 2</fullName>
        <ecNumber evidence="1">5.4.2.7</ecNumber>
    </recommendedName>
    <alternativeName>
        <fullName evidence="1">Phosphodeoxyribomutase 2</fullName>
    </alternativeName>
</protein>
<feature type="chain" id="PRO_0000258311" description="Phosphopentomutase 2">
    <location>
        <begin position="1"/>
        <end position="403"/>
    </location>
</feature>
<feature type="binding site" evidence="1">
    <location>
        <position position="13"/>
    </location>
    <ligand>
        <name>Mn(2+)</name>
        <dbReference type="ChEBI" id="CHEBI:29035"/>
        <label>1</label>
    </ligand>
</feature>
<feature type="binding site" evidence="1">
    <location>
        <position position="298"/>
    </location>
    <ligand>
        <name>Mn(2+)</name>
        <dbReference type="ChEBI" id="CHEBI:29035"/>
        <label>2</label>
    </ligand>
</feature>
<feature type="binding site" evidence="1">
    <location>
        <position position="303"/>
    </location>
    <ligand>
        <name>Mn(2+)</name>
        <dbReference type="ChEBI" id="CHEBI:29035"/>
        <label>2</label>
    </ligand>
</feature>
<feature type="binding site" evidence="1">
    <location>
        <position position="339"/>
    </location>
    <ligand>
        <name>Mn(2+)</name>
        <dbReference type="ChEBI" id="CHEBI:29035"/>
        <label>1</label>
    </ligand>
</feature>
<feature type="binding site" evidence="1">
    <location>
        <position position="340"/>
    </location>
    <ligand>
        <name>Mn(2+)</name>
        <dbReference type="ChEBI" id="CHEBI:29035"/>
        <label>1</label>
    </ligand>
</feature>
<feature type="binding site" evidence="1">
    <location>
        <position position="351"/>
    </location>
    <ligand>
        <name>Mn(2+)</name>
        <dbReference type="ChEBI" id="CHEBI:29035"/>
        <label>2</label>
    </ligand>
</feature>
<sequence length="403" mass="44202">MSQFDRIHLVVLDSVGIGAAPDANDFVNAGVPDGASDTLGHISKTVGLAVPNMAKIGLGNIPRPQALKTVPAEENPSGYATKLQEVSLGKDTMTGHWEIMGLNITEPFDTFWNGFPEDIITKIEDFSGRKVIREANKPYSGTAVIDDFGPRQMETGELIIYTSADPVLQIAAHEDIIPLEELYRICEYARSITMERPALLGRIIARPYVGEPGNFTRTANRHDYAVSPFEDTVLNKLDQAGIDTYAVGKINDIFNGSGINHDMGHNKSNSHGIDTLIKTMGLSEFEKGFSFTNLVDFDALYGHRRDPHGYRDCLHEFDERLPEIISAMRDKDLLLITADHGNDPTYAGTDHTREYIPLLAYSPSFTGNGLIPVGHFADISATVADNFGVDTAMIGESFLQDLV</sequence>
<gene>
    <name evidence="1" type="primary">deoB2</name>
    <name type="ordered locus">SAK_2008</name>
</gene>
<accession>Q3JYQ5</accession>
<reference key="1">
    <citation type="journal article" date="2005" name="Proc. Natl. Acad. Sci. U.S.A.">
        <title>Genome analysis of multiple pathogenic isolates of Streptococcus agalactiae: implications for the microbial 'pan-genome'.</title>
        <authorList>
            <person name="Tettelin H."/>
            <person name="Masignani V."/>
            <person name="Cieslewicz M.J."/>
            <person name="Donati C."/>
            <person name="Medini D."/>
            <person name="Ward N.L."/>
            <person name="Angiuoli S.V."/>
            <person name="Crabtree J."/>
            <person name="Jones A.L."/>
            <person name="Durkin A.S."/>
            <person name="DeBoy R.T."/>
            <person name="Davidsen T.M."/>
            <person name="Mora M."/>
            <person name="Scarselli M."/>
            <person name="Margarit y Ros I."/>
            <person name="Peterson J.D."/>
            <person name="Hauser C.R."/>
            <person name="Sundaram J.P."/>
            <person name="Nelson W.C."/>
            <person name="Madupu R."/>
            <person name="Brinkac L.M."/>
            <person name="Dodson R.J."/>
            <person name="Rosovitz M.J."/>
            <person name="Sullivan S.A."/>
            <person name="Daugherty S.C."/>
            <person name="Haft D.H."/>
            <person name="Selengut J."/>
            <person name="Gwinn M.L."/>
            <person name="Zhou L."/>
            <person name="Zafar N."/>
            <person name="Khouri H."/>
            <person name="Radune D."/>
            <person name="Dimitrov G."/>
            <person name="Watkins K."/>
            <person name="O'Connor K.J."/>
            <person name="Smith S."/>
            <person name="Utterback T.R."/>
            <person name="White O."/>
            <person name="Rubens C.E."/>
            <person name="Grandi G."/>
            <person name="Madoff L.C."/>
            <person name="Kasper D.L."/>
            <person name="Telford J.L."/>
            <person name="Wessels M.R."/>
            <person name="Rappuoli R."/>
            <person name="Fraser C.M."/>
        </authorList>
    </citation>
    <scope>NUCLEOTIDE SEQUENCE [LARGE SCALE GENOMIC DNA]</scope>
    <source>
        <strain>ATCC 27591 / A909 / CDC SS700</strain>
    </source>
</reference>
<proteinExistence type="inferred from homology"/>
<name>DEOB2_STRA1</name>
<dbReference type="EC" id="5.4.2.7" evidence="1"/>
<dbReference type="EMBL" id="CP000114">
    <property type="protein sequence ID" value="ABA45870.1"/>
    <property type="molecule type" value="Genomic_DNA"/>
</dbReference>
<dbReference type="RefSeq" id="WP_000077187.1">
    <property type="nucleotide sequence ID" value="NC_007432.1"/>
</dbReference>
<dbReference type="SMR" id="Q3JYQ5"/>
<dbReference type="KEGG" id="sak:SAK_2008"/>
<dbReference type="HOGENOM" id="CLU_053861_0_0_9"/>
<dbReference type="UniPathway" id="UPA00002">
    <property type="reaction ID" value="UER00467"/>
</dbReference>
<dbReference type="GO" id="GO:0005829">
    <property type="term" value="C:cytosol"/>
    <property type="evidence" value="ECO:0007669"/>
    <property type="project" value="TreeGrafter"/>
</dbReference>
<dbReference type="GO" id="GO:0000287">
    <property type="term" value="F:magnesium ion binding"/>
    <property type="evidence" value="ECO:0007669"/>
    <property type="project" value="InterPro"/>
</dbReference>
<dbReference type="GO" id="GO:0030145">
    <property type="term" value="F:manganese ion binding"/>
    <property type="evidence" value="ECO:0007669"/>
    <property type="project" value="UniProtKB-UniRule"/>
</dbReference>
<dbReference type="GO" id="GO:0008973">
    <property type="term" value="F:phosphopentomutase activity"/>
    <property type="evidence" value="ECO:0007669"/>
    <property type="project" value="UniProtKB-UniRule"/>
</dbReference>
<dbReference type="GO" id="GO:0006018">
    <property type="term" value="P:2-deoxyribose 1-phosphate catabolic process"/>
    <property type="evidence" value="ECO:0007669"/>
    <property type="project" value="UniProtKB-UniRule"/>
</dbReference>
<dbReference type="GO" id="GO:0006015">
    <property type="term" value="P:5-phosphoribose 1-diphosphate biosynthetic process"/>
    <property type="evidence" value="ECO:0007669"/>
    <property type="project" value="UniProtKB-UniPathway"/>
</dbReference>
<dbReference type="GO" id="GO:0043094">
    <property type="term" value="P:metabolic compound salvage"/>
    <property type="evidence" value="ECO:0007669"/>
    <property type="project" value="InterPro"/>
</dbReference>
<dbReference type="GO" id="GO:0009117">
    <property type="term" value="P:nucleotide metabolic process"/>
    <property type="evidence" value="ECO:0007669"/>
    <property type="project" value="InterPro"/>
</dbReference>
<dbReference type="CDD" id="cd16009">
    <property type="entry name" value="PPM"/>
    <property type="match status" value="1"/>
</dbReference>
<dbReference type="FunFam" id="3.30.70.1250:FF:000001">
    <property type="entry name" value="Phosphopentomutase"/>
    <property type="match status" value="1"/>
</dbReference>
<dbReference type="Gene3D" id="3.40.720.10">
    <property type="entry name" value="Alkaline Phosphatase, subunit A"/>
    <property type="match status" value="1"/>
</dbReference>
<dbReference type="Gene3D" id="3.30.70.1250">
    <property type="entry name" value="Phosphopentomutase"/>
    <property type="match status" value="1"/>
</dbReference>
<dbReference type="HAMAP" id="MF_00740">
    <property type="entry name" value="Phosphopentomut"/>
    <property type="match status" value="1"/>
</dbReference>
<dbReference type="InterPro" id="IPR017850">
    <property type="entry name" value="Alkaline_phosphatase_core_sf"/>
</dbReference>
<dbReference type="InterPro" id="IPR010045">
    <property type="entry name" value="DeoB"/>
</dbReference>
<dbReference type="InterPro" id="IPR006124">
    <property type="entry name" value="Metalloenzyme"/>
</dbReference>
<dbReference type="InterPro" id="IPR024052">
    <property type="entry name" value="Phosphopentomutase_DeoB_cap_sf"/>
</dbReference>
<dbReference type="NCBIfam" id="TIGR01696">
    <property type="entry name" value="deoB"/>
    <property type="match status" value="1"/>
</dbReference>
<dbReference type="NCBIfam" id="NF003766">
    <property type="entry name" value="PRK05362.1"/>
    <property type="match status" value="1"/>
</dbReference>
<dbReference type="PANTHER" id="PTHR21110">
    <property type="entry name" value="PHOSPHOPENTOMUTASE"/>
    <property type="match status" value="1"/>
</dbReference>
<dbReference type="PANTHER" id="PTHR21110:SF0">
    <property type="entry name" value="PHOSPHOPENTOMUTASE"/>
    <property type="match status" value="1"/>
</dbReference>
<dbReference type="Pfam" id="PF01676">
    <property type="entry name" value="Metalloenzyme"/>
    <property type="match status" value="1"/>
</dbReference>
<dbReference type="PIRSF" id="PIRSF001491">
    <property type="entry name" value="Ppentomutase"/>
    <property type="match status" value="1"/>
</dbReference>
<dbReference type="SUPFAM" id="SSF53649">
    <property type="entry name" value="Alkaline phosphatase-like"/>
    <property type="match status" value="1"/>
</dbReference>
<dbReference type="SUPFAM" id="SSF143856">
    <property type="entry name" value="DeoB insert domain-like"/>
    <property type="match status" value="1"/>
</dbReference>
<evidence type="ECO:0000255" key="1">
    <source>
        <dbReference type="HAMAP-Rule" id="MF_00740"/>
    </source>
</evidence>
<keyword id="KW-0963">Cytoplasm</keyword>
<keyword id="KW-0413">Isomerase</keyword>
<keyword id="KW-0464">Manganese</keyword>
<keyword id="KW-0479">Metal-binding</keyword>